<reference key="1">
    <citation type="journal article" date="2002" name="Nature">
        <title>Sequence and analysis of chromosome 2 of Dictyostelium discoideum.</title>
        <authorList>
            <person name="Gloeckner G."/>
            <person name="Eichinger L."/>
            <person name="Szafranski K."/>
            <person name="Pachebat J.A."/>
            <person name="Bankier A.T."/>
            <person name="Dear P.H."/>
            <person name="Lehmann R."/>
            <person name="Baumgart C."/>
            <person name="Parra G."/>
            <person name="Abril J.F."/>
            <person name="Guigo R."/>
            <person name="Kumpf K."/>
            <person name="Tunggal B."/>
            <person name="Cox E.C."/>
            <person name="Quail M.A."/>
            <person name="Platzer M."/>
            <person name="Rosenthal A."/>
            <person name="Noegel A.A."/>
        </authorList>
    </citation>
    <scope>NUCLEOTIDE SEQUENCE [LARGE SCALE GENOMIC DNA]</scope>
    <source>
        <strain>AX4</strain>
    </source>
</reference>
<reference key="2">
    <citation type="journal article" date="2005" name="Nature">
        <title>The genome of the social amoeba Dictyostelium discoideum.</title>
        <authorList>
            <person name="Eichinger L."/>
            <person name="Pachebat J.A."/>
            <person name="Gloeckner G."/>
            <person name="Rajandream M.A."/>
            <person name="Sucgang R."/>
            <person name="Berriman M."/>
            <person name="Song J."/>
            <person name="Olsen R."/>
            <person name="Szafranski K."/>
            <person name="Xu Q."/>
            <person name="Tunggal B."/>
            <person name="Kummerfeld S."/>
            <person name="Madera M."/>
            <person name="Konfortov B.A."/>
            <person name="Rivero F."/>
            <person name="Bankier A.T."/>
            <person name="Lehmann R."/>
            <person name="Hamlin N."/>
            <person name="Davies R."/>
            <person name="Gaudet P."/>
            <person name="Fey P."/>
            <person name="Pilcher K."/>
            <person name="Chen G."/>
            <person name="Saunders D."/>
            <person name="Sodergren E.J."/>
            <person name="Davis P."/>
            <person name="Kerhornou A."/>
            <person name="Nie X."/>
            <person name="Hall N."/>
            <person name="Anjard C."/>
            <person name="Hemphill L."/>
            <person name="Bason N."/>
            <person name="Farbrother P."/>
            <person name="Desany B."/>
            <person name="Just E."/>
            <person name="Morio T."/>
            <person name="Rost R."/>
            <person name="Churcher C.M."/>
            <person name="Cooper J."/>
            <person name="Haydock S."/>
            <person name="van Driessche N."/>
            <person name="Cronin A."/>
            <person name="Goodhead I."/>
            <person name="Muzny D.M."/>
            <person name="Mourier T."/>
            <person name="Pain A."/>
            <person name="Lu M."/>
            <person name="Harper D."/>
            <person name="Lindsay R."/>
            <person name="Hauser H."/>
            <person name="James K.D."/>
            <person name="Quiles M."/>
            <person name="Madan Babu M."/>
            <person name="Saito T."/>
            <person name="Buchrieser C."/>
            <person name="Wardroper A."/>
            <person name="Felder M."/>
            <person name="Thangavelu M."/>
            <person name="Johnson D."/>
            <person name="Knights A."/>
            <person name="Loulseged H."/>
            <person name="Mungall K.L."/>
            <person name="Oliver K."/>
            <person name="Price C."/>
            <person name="Quail M.A."/>
            <person name="Urushihara H."/>
            <person name="Hernandez J."/>
            <person name="Rabbinowitsch E."/>
            <person name="Steffen D."/>
            <person name="Sanders M."/>
            <person name="Ma J."/>
            <person name="Kohara Y."/>
            <person name="Sharp S."/>
            <person name="Simmonds M.N."/>
            <person name="Spiegler S."/>
            <person name="Tivey A."/>
            <person name="Sugano S."/>
            <person name="White B."/>
            <person name="Walker D."/>
            <person name="Woodward J.R."/>
            <person name="Winckler T."/>
            <person name="Tanaka Y."/>
            <person name="Shaulsky G."/>
            <person name="Schleicher M."/>
            <person name="Weinstock G.M."/>
            <person name="Rosenthal A."/>
            <person name="Cox E.C."/>
            <person name="Chisholm R.L."/>
            <person name="Gibbs R.A."/>
            <person name="Loomis W.F."/>
            <person name="Platzer M."/>
            <person name="Kay R.R."/>
            <person name="Williams J.G."/>
            <person name="Dear P.H."/>
            <person name="Noegel A.A."/>
            <person name="Barrell B.G."/>
            <person name="Kuspa A."/>
        </authorList>
    </citation>
    <scope>NUCLEOTIDE SEQUENCE [LARGE SCALE GENOMIC DNA]</scope>
    <source>
        <strain>AX4</strain>
    </source>
</reference>
<protein>
    <recommendedName>
        <fullName>Putative uncharacterized protein DDB_G0272516</fullName>
    </recommendedName>
</protein>
<proteinExistence type="predicted"/>
<organism>
    <name type="scientific">Dictyostelium discoideum</name>
    <name type="common">Social amoeba</name>
    <dbReference type="NCBI Taxonomy" id="44689"/>
    <lineage>
        <taxon>Eukaryota</taxon>
        <taxon>Amoebozoa</taxon>
        <taxon>Evosea</taxon>
        <taxon>Eumycetozoa</taxon>
        <taxon>Dictyostelia</taxon>
        <taxon>Dictyosteliales</taxon>
        <taxon>Dictyosteliaceae</taxon>
        <taxon>Dictyostelium</taxon>
    </lineage>
</organism>
<dbReference type="EMBL" id="AAFI02000008">
    <property type="protein sequence ID" value="EAL71182.1"/>
    <property type="molecule type" value="Genomic_DNA"/>
</dbReference>
<dbReference type="RefSeq" id="XP_645093.1">
    <property type="nucleotide sequence ID" value="XM_640001.1"/>
</dbReference>
<dbReference type="SMR" id="Q86KH4"/>
<dbReference type="PaxDb" id="44689-DDB0168830"/>
<dbReference type="EnsemblProtists" id="EAL71182">
    <property type="protein sequence ID" value="EAL71182"/>
    <property type="gene ID" value="DDB_G0272516"/>
</dbReference>
<dbReference type="GeneID" id="8618487"/>
<dbReference type="KEGG" id="ddi:DDB_G0272516"/>
<dbReference type="dictyBase" id="DDB_G0272516"/>
<dbReference type="VEuPathDB" id="AmoebaDB:DDB_G0272516"/>
<dbReference type="HOGENOM" id="CLU_588540_0_0_1"/>
<dbReference type="InParanoid" id="Q86KH4"/>
<dbReference type="OMA" id="THWTRTI"/>
<dbReference type="PRO" id="PR:Q86KH4"/>
<dbReference type="Proteomes" id="UP000002195">
    <property type="component" value="Chromosome 2"/>
</dbReference>
<dbReference type="InterPro" id="IPR040843">
    <property type="entry name" value="RAMA"/>
</dbReference>
<dbReference type="Pfam" id="PF18755">
    <property type="entry name" value="RAMA"/>
    <property type="match status" value="1"/>
</dbReference>
<accession>Q86KH4</accession>
<accession>Q559L3</accession>
<name>Y8830_DICDI</name>
<sequence>MVNEHNVTLSNLIDFGLIKPNQEVKYSYRGVSYTGVILLNGEIHTNGVSFTNPTHWTRTISGNNCSGWGTVKLSGASGPPLLKLKREYLFRVGSTGKNKKKTQKQQQPQQPQPQPQPQQQQQQQQQQQQQQQQQQQPNNNDNDSESEIYKKSDTSETSDQDIDNDDDDAGGQSNNRTTTTTTTTTTTTTTNRQNSPQKKIPSTAITNPKEKKKEKKENILTKKKQQSLQYQQQLQLLQRQNSPPSVSPSSSTSTSSSTSSPASNQIFNSFGPNSQNHNQYGINYNSQQHQPQQYNNNNNNNNNNNNNNNNNNNNNNNNNNNNNNNNNNNNNNNNNNNNNNNSNNNNNNNNNNNNNININNNNNINNNNNINNNSNNQPNCCSPNSNCQYYGYNQQNPPKHQYPNNFLTDGHNPSPPIPVLPFTNQSQNQNQNQNQNQNQNQKSKSKSKSKSKFKSKSKSKSKSKS</sequence>
<evidence type="ECO:0000255" key="1"/>
<evidence type="ECO:0000256" key="2">
    <source>
        <dbReference type="SAM" id="MobiDB-lite"/>
    </source>
</evidence>
<keyword id="KW-0175">Coiled coil</keyword>
<keyword id="KW-1185">Reference proteome</keyword>
<feature type="chain" id="PRO_0000348170" description="Putative uncharacterized protein DDB_G0272516">
    <location>
        <begin position="1"/>
        <end position="465"/>
    </location>
</feature>
<feature type="domain" description="RAMA" evidence="1">
    <location>
        <begin position="6"/>
        <end position="91"/>
    </location>
</feature>
<feature type="region of interest" description="Disordered" evidence="2">
    <location>
        <begin position="95"/>
        <end position="377"/>
    </location>
</feature>
<feature type="region of interest" description="Disordered" evidence="2">
    <location>
        <begin position="392"/>
        <end position="465"/>
    </location>
</feature>
<feature type="coiled-coil region" evidence="1">
    <location>
        <begin position="214"/>
        <end position="242"/>
    </location>
</feature>
<feature type="compositionally biased region" description="Low complexity" evidence="2">
    <location>
        <begin position="117"/>
        <end position="137"/>
    </location>
</feature>
<feature type="compositionally biased region" description="Acidic residues" evidence="2">
    <location>
        <begin position="156"/>
        <end position="169"/>
    </location>
</feature>
<feature type="compositionally biased region" description="Low complexity" evidence="2">
    <location>
        <begin position="177"/>
        <end position="190"/>
    </location>
</feature>
<feature type="compositionally biased region" description="Basic and acidic residues" evidence="2">
    <location>
        <begin position="208"/>
        <end position="220"/>
    </location>
</feature>
<feature type="compositionally biased region" description="Low complexity" evidence="2">
    <location>
        <begin position="226"/>
        <end position="263"/>
    </location>
</feature>
<feature type="compositionally biased region" description="Polar residues" evidence="2">
    <location>
        <begin position="264"/>
        <end position="294"/>
    </location>
</feature>
<feature type="compositionally biased region" description="Low complexity" evidence="2">
    <location>
        <begin position="295"/>
        <end position="376"/>
    </location>
</feature>
<feature type="compositionally biased region" description="Polar residues" evidence="2">
    <location>
        <begin position="392"/>
        <end position="407"/>
    </location>
</feature>
<feature type="compositionally biased region" description="Low complexity" evidence="2">
    <location>
        <begin position="424"/>
        <end position="442"/>
    </location>
</feature>
<feature type="compositionally biased region" description="Basic residues" evidence="2">
    <location>
        <begin position="443"/>
        <end position="465"/>
    </location>
</feature>
<gene>
    <name type="ORF">DDB_G0272516</name>
</gene>